<gene>
    <name type="ordered locus">BQ2027_MB2592</name>
</gene>
<accession>P65008</accession>
<accession>A0A1R3Y1K1</accession>
<accession>Q50735</accession>
<accession>X2BLQ1</accession>
<feature type="chain" id="PRO_0000014135" description="Uncharacterized ABC transporter permease Mb2592">
    <location>
        <begin position="1"/>
        <end position="349"/>
    </location>
</feature>
<feature type="transmembrane region" description="Helical" evidence="1">
    <location>
        <begin position="17"/>
        <end position="37"/>
    </location>
</feature>
<feature type="transmembrane region" description="Helical" evidence="1">
    <location>
        <begin position="230"/>
        <end position="250"/>
    </location>
</feature>
<feature type="transmembrane region" description="Helical" evidence="1">
    <location>
        <begin position="284"/>
        <end position="304"/>
    </location>
</feature>
<feature type="transmembrane region" description="Helical" evidence="1">
    <location>
        <begin position="308"/>
        <end position="328"/>
    </location>
</feature>
<feature type="region of interest" description="Disordered" evidence="2">
    <location>
        <begin position="111"/>
        <end position="131"/>
    </location>
</feature>
<organism>
    <name type="scientific">Mycobacterium bovis (strain ATCC BAA-935 / AF2122/97)</name>
    <dbReference type="NCBI Taxonomy" id="233413"/>
    <lineage>
        <taxon>Bacteria</taxon>
        <taxon>Bacillati</taxon>
        <taxon>Actinomycetota</taxon>
        <taxon>Actinomycetes</taxon>
        <taxon>Mycobacteriales</taxon>
        <taxon>Mycobacteriaceae</taxon>
        <taxon>Mycobacterium</taxon>
        <taxon>Mycobacterium tuberculosis complex</taxon>
    </lineage>
</organism>
<evidence type="ECO:0000255" key="1"/>
<evidence type="ECO:0000256" key="2">
    <source>
        <dbReference type="SAM" id="MobiDB-lite"/>
    </source>
</evidence>
<evidence type="ECO:0000305" key="3"/>
<protein>
    <recommendedName>
        <fullName>Uncharacterized ABC transporter permease Mb2592</fullName>
    </recommendedName>
</protein>
<proteinExistence type="inferred from homology"/>
<dbReference type="EMBL" id="LT708304">
    <property type="protein sequence ID" value="SIU01210.1"/>
    <property type="molecule type" value="Genomic_DNA"/>
</dbReference>
<dbReference type="RefSeq" id="NP_856238.1">
    <property type="nucleotide sequence ID" value="NC_002945.3"/>
</dbReference>
<dbReference type="RefSeq" id="WP_003413230.1">
    <property type="nucleotide sequence ID" value="NC_002945.4"/>
</dbReference>
<dbReference type="SMR" id="P65008"/>
<dbReference type="KEGG" id="mbo:BQ2027_MB2592"/>
<dbReference type="PATRIC" id="fig|233413.5.peg.2851"/>
<dbReference type="Proteomes" id="UP000001419">
    <property type="component" value="Chromosome"/>
</dbReference>
<dbReference type="GO" id="GO:0005886">
    <property type="term" value="C:plasma membrane"/>
    <property type="evidence" value="ECO:0007669"/>
    <property type="project" value="UniProtKB-SubCell"/>
</dbReference>
<dbReference type="InterPro" id="IPR051125">
    <property type="entry name" value="ABC-4/HrtB_transporter"/>
</dbReference>
<dbReference type="InterPro" id="IPR003838">
    <property type="entry name" value="ABC3_permease_C"/>
</dbReference>
<dbReference type="InterPro" id="IPR025857">
    <property type="entry name" value="MacB_PCD"/>
</dbReference>
<dbReference type="PANTHER" id="PTHR43738">
    <property type="entry name" value="ABC TRANSPORTER, MEMBRANE PROTEIN"/>
    <property type="match status" value="1"/>
</dbReference>
<dbReference type="PANTHER" id="PTHR43738:SF1">
    <property type="entry name" value="HEMIN TRANSPORT SYSTEM PERMEASE PROTEIN HRTB-RELATED"/>
    <property type="match status" value="1"/>
</dbReference>
<dbReference type="Pfam" id="PF02687">
    <property type="entry name" value="FtsX"/>
    <property type="match status" value="1"/>
</dbReference>
<dbReference type="Pfam" id="PF12704">
    <property type="entry name" value="MacB_PCD"/>
    <property type="match status" value="1"/>
</dbReference>
<reference key="1">
    <citation type="journal article" date="2003" name="Proc. Natl. Acad. Sci. U.S.A.">
        <title>The complete genome sequence of Mycobacterium bovis.</title>
        <authorList>
            <person name="Garnier T."/>
            <person name="Eiglmeier K."/>
            <person name="Camus J.-C."/>
            <person name="Medina N."/>
            <person name="Mansoor H."/>
            <person name="Pryor M."/>
            <person name="Duthoy S."/>
            <person name="Grondin S."/>
            <person name="Lacroix C."/>
            <person name="Monsempe C."/>
            <person name="Simon S."/>
            <person name="Harris B."/>
            <person name="Atkin R."/>
            <person name="Doggett J."/>
            <person name="Mayes R."/>
            <person name="Keating L."/>
            <person name="Wheeler P.R."/>
            <person name="Parkhill J."/>
            <person name="Barrell B.G."/>
            <person name="Cole S.T."/>
            <person name="Gordon S.V."/>
            <person name="Hewinson R.G."/>
        </authorList>
    </citation>
    <scope>NUCLEOTIDE SEQUENCE [LARGE SCALE GENOMIC DNA]</scope>
    <source>
        <strain>ATCC BAA-935 / AF2122/97</strain>
    </source>
</reference>
<reference key="2">
    <citation type="journal article" date="2017" name="Genome Announc.">
        <title>Updated reference genome sequence and annotation of Mycobacterium bovis AF2122/97.</title>
        <authorList>
            <person name="Malone K.M."/>
            <person name="Farrell D."/>
            <person name="Stuber T.P."/>
            <person name="Schubert O.T."/>
            <person name="Aebersold R."/>
            <person name="Robbe-Austerman S."/>
            <person name="Gordon S.V."/>
        </authorList>
    </citation>
    <scope>NUCLEOTIDE SEQUENCE [LARGE SCALE GENOMIC DNA]</scope>
    <scope>GENOME REANNOTATION</scope>
    <source>
        <strain>ATCC BAA-935 / AF2122/97</strain>
    </source>
</reference>
<keyword id="KW-1003">Cell membrane</keyword>
<keyword id="KW-0472">Membrane</keyword>
<keyword id="KW-1185">Reference proteome</keyword>
<keyword id="KW-0812">Transmembrane</keyword>
<keyword id="KW-1133">Transmembrane helix</keyword>
<keyword id="KW-0813">Transport</keyword>
<name>Y2592_MYCBO</name>
<sequence length="349" mass="36025">MLFAALRDVQWRKRRLVIAIVSTGLVFAMTLVLTGLVNGFRVEAERTVDSMGVDAFVVKAGAAGPFLGSTPFAQIDLPQVARAPGVLAAAPLATAPSTIRQGTSARNVTAFGAPEHGPGMPRVSDGRAPSTPDEVAVSSTLGRNLGDDLQVGARTLRIVGIVPESTALAKIPNIFLTTEGLQQLAYNGQPTISSIGIDGMPRQLPDGYQTVNRADAVSDLMRPLKVAVDAITVVAVLLWIVAALIVGSVVYLSALERLRDFAVFKAIGVPTRSILAGLALQAVVVALLAAVVGGILSLLLAPLFPMTVVVPLSAFVALPAIATVIGLLASVAGLRRVVAIDPALAFGGP</sequence>
<comment type="subcellular location">
    <subcellularLocation>
        <location evidence="3">Cell membrane</location>
        <topology evidence="3">Multi-pass membrane protein</topology>
    </subcellularLocation>
</comment>
<comment type="similarity">
    <text evidence="3">Belongs to the ABC-4 integral membrane protein family.</text>
</comment>